<keyword id="KW-0012">Acyltransferase</keyword>
<keyword id="KW-0963">Cytoplasm</keyword>
<keyword id="KW-0275">Fatty acid biosynthesis</keyword>
<keyword id="KW-0276">Fatty acid metabolism</keyword>
<keyword id="KW-0444">Lipid biosynthesis</keyword>
<keyword id="KW-0443">Lipid metabolism</keyword>
<keyword id="KW-0808">Transferase</keyword>
<reference key="1">
    <citation type="journal article" date="2012" name="J. Bacteriol.">
        <title>Complete annotated genome sequence of Mycobacterium tuberculosis Erdman.</title>
        <authorList>
            <person name="Miyoshi-Akiyama T."/>
            <person name="Matsumura K."/>
            <person name="Iwai H."/>
            <person name="Funatogawa K."/>
            <person name="Kirikae T."/>
        </authorList>
    </citation>
    <scope>NUCLEOTIDE SEQUENCE [LARGE SCALE GENOMIC DNA]</scope>
    <source>
        <strain>ATCC 35801 / TMC 107 / Erdman</strain>
    </source>
</reference>
<reference key="2">
    <citation type="journal article" date="2010" name="Mol. Microbiol.">
        <title>M. tuberculosis intramembrane protease Rip1 controls transcription through three anti-sigma factor substrates.</title>
        <authorList>
            <person name="Sklar J.G."/>
            <person name="Makinoshima H."/>
            <person name="Schneider J.S."/>
            <person name="Glickman M.S."/>
        </authorList>
    </citation>
    <scope>INDUCTION</scope>
    <source>
        <strain>ATCC 35801 / TMC 107 / Erdman</strain>
    </source>
</reference>
<gene>
    <name type="primary">kasA</name>
    <name type="ordered locus">ERDMAN_2470</name>
</gene>
<accession>H8ESN0</accession>
<sequence>MSQPSTANGGFPSVVVTAVTATTSISPDIESTWKGLLAGESGIHALEDEFVTKWDLAVKIGGHLKDPVDSHMGRLDMRRMSYVQRMGKLLGGQLWESAGSPEVDPDRFAVVVGTGLGGAERIVESYDLMNAGGPRKVSPLAVQMIMPNGAAAVIGLQLGARAGVMTPVSACSSGSEAIAHAWRQIVMGDADVAVCGGVEGPIEALPIAAFSMMRAMSTRNDEPERASRPFDKDRDGFVFGEAGALMLIETEEHAKARGAKPLARLLGAGITSDAFHMVAPAADGVRAGRAMTRSLELAGLSPADIDHVNAHGTATPIGDAAEANAIRVAGCDQAAVYAPKSALGHSIGAVGALESVLTVLTLRDGVIPPTLNYETPDPEIDLDVVAGEPRYGDYRYAVNNSFGFGGHNVALAFGRY</sequence>
<dbReference type="EC" id="2.3.1.293" evidence="1"/>
<dbReference type="EMBL" id="AP012340">
    <property type="protein sequence ID" value="BAL66261.1"/>
    <property type="molecule type" value="Genomic_DNA"/>
</dbReference>
<dbReference type="RefSeq" id="WP_003411571.1">
    <property type="nucleotide sequence ID" value="NZ_KK339487.1"/>
</dbReference>
<dbReference type="SMR" id="H8ESN0"/>
<dbReference type="GeneID" id="45426225"/>
<dbReference type="KEGG" id="mtn:ERDMAN_2470"/>
<dbReference type="PATRIC" id="fig|652616.3.peg.2513"/>
<dbReference type="HOGENOM" id="CLU_000022_69_2_11"/>
<dbReference type="UniPathway" id="UPA00915"/>
<dbReference type="GO" id="GO:0005829">
    <property type="term" value="C:cytosol"/>
    <property type="evidence" value="ECO:0007669"/>
    <property type="project" value="TreeGrafter"/>
</dbReference>
<dbReference type="GO" id="GO:0004315">
    <property type="term" value="F:3-oxoacyl-[acyl-carrier-protein] synthase activity"/>
    <property type="evidence" value="ECO:0007669"/>
    <property type="project" value="TreeGrafter"/>
</dbReference>
<dbReference type="GO" id="GO:0006633">
    <property type="term" value="P:fatty acid biosynthetic process"/>
    <property type="evidence" value="ECO:0007669"/>
    <property type="project" value="UniProtKB-KW"/>
</dbReference>
<dbReference type="CDD" id="cd00834">
    <property type="entry name" value="KAS_I_II"/>
    <property type="match status" value="1"/>
</dbReference>
<dbReference type="FunFam" id="3.40.47.10:FF:000029">
    <property type="entry name" value="3-oxoacyl-[acyl-carrier-protein] synthase 1"/>
    <property type="match status" value="1"/>
</dbReference>
<dbReference type="FunFam" id="3.40.47.10:FF:000018">
    <property type="entry name" value="3-oxoacyl-[acyl-carrier-protein] synthase 2"/>
    <property type="match status" value="1"/>
</dbReference>
<dbReference type="Gene3D" id="3.40.47.10">
    <property type="match status" value="2"/>
</dbReference>
<dbReference type="InterPro" id="IPR000794">
    <property type="entry name" value="Beta-ketoacyl_synthase"/>
</dbReference>
<dbReference type="InterPro" id="IPR014031">
    <property type="entry name" value="Ketoacyl_synth_C"/>
</dbReference>
<dbReference type="InterPro" id="IPR014030">
    <property type="entry name" value="Ketoacyl_synth_N"/>
</dbReference>
<dbReference type="InterPro" id="IPR020841">
    <property type="entry name" value="PKS_Beta-ketoAc_synthase_dom"/>
</dbReference>
<dbReference type="InterPro" id="IPR016039">
    <property type="entry name" value="Thiolase-like"/>
</dbReference>
<dbReference type="NCBIfam" id="NF005589">
    <property type="entry name" value="PRK07314.1"/>
    <property type="match status" value="1"/>
</dbReference>
<dbReference type="NCBIfam" id="NF005916">
    <property type="entry name" value="PRK07910.1"/>
    <property type="match status" value="1"/>
</dbReference>
<dbReference type="PANTHER" id="PTHR11712:SF336">
    <property type="entry name" value="3-OXOACYL-[ACYL-CARRIER-PROTEIN] SYNTHASE, MITOCHONDRIAL"/>
    <property type="match status" value="1"/>
</dbReference>
<dbReference type="PANTHER" id="PTHR11712">
    <property type="entry name" value="POLYKETIDE SYNTHASE-RELATED"/>
    <property type="match status" value="1"/>
</dbReference>
<dbReference type="Pfam" id="PF00109">
    <property type="entry name" value="ketoacyl-synt"/>
    <property type="match status" value="1"/>
</dbReference>
<dbReference type="Pfam" id="PF02801">
    <property type="entry name" value="Ketoacyl-synt_C"/>
    <property type="match status" value="1"/>
</dbReference>
<dbReference type="SMART" id="SM00825">
    <property type="entry name" value="PKS_KS"/>
    <property type="match status" value="1"/>
</dbReference>
<dbReference type="SUPFAM" id="SSF53901">
    <property type="entry name" value="Thiolase-like"/>
    <property type="match status" value="2"/>
</dbReference>
<dbReference type="PROSITE" id="PS52004">
    <property type="entry name" value="KS3_2"/>
    <property type="match status" value="1"/>
</dbReference>
<evidence type="ECO:0000250" key="1">
    <source>
        <dbReference type="UniProtKB" id="P9WQD9"/>
    </source>
</evidence>
<evidence type="ECO:0000255" key="2">
    <source>
        <dbReference type="PROSITE-ProRule" id="PRU01348"/>
    </source>
</evidence>
<evidence type="ECO:0000269" key="3">
    <source>
    </source>
</evidence>
<evidence type="ECO:0000305" key="4"/>
<protein>
    <recommendedName>
        <fullName>3-oxoacyl-[acyl-carrier-protein] synthase 1</fullName>
        <ecNumber evidence="1">2.3.1.293</ecNumber>
    </recommendedName>
    <alternativeName>
        <fullName>Beta-ketoacyl-ACP synthase 1</fullName>
        <shortName>KAS 1</shortName>
    </alternativeName>
</protein>
<feature type="chain" id="PRO_0000422686" description="3-oxoacyl-[acyl-carrier-protein] synthase 1">
    <location>
        <begin position="1"/>
        <end position="416"/>
    </location>
</feature>
<feature type="domain" description="Ketosynthase family 3 (KS3)" evidence="2">
    <location>
        <begin position="11"/>
        <end position="415"/>
    </location>
</feature>
<feature type="active site" description="For beta-ketoacyl synthase activity" evidence="2">
    <location>
        <position position="171"/>
    </location>
</feature>
<feature type="active site" description="For beta-ketoacyl synthase activity" evidence="2">
    <location>
        <position position="311"/>
    </location>
</feature>
<feature type="active site" description="For beta-ketoacyl synthase activity" evidence="2">
    <location>
        <position position="345"/>
    </location>
</feature>
<feature type="binding site" evidence="1">
    <location>
        <position position="311"/>
    </location>
    <ligand>
        <name>substrate</name>
    </ligand>
</feature>
<feature type="binding site" evidence="1">
    <location>
        <position position="345"/>
    </location>
    <ligand>
        <name>substrate</name>
    </ligand>
</feature>
<organism>
    <name type="scientific">Mycobacterium tuberculosis (strain ATCC 35801 / TMC 107 / Erdman)</name>
    <dbReference type="NCBI Taxonomy" id="652616"/>
    <lineage>
        <taxon>Bacteria</taxon>
        <taxon>Bacillati</taxon>
        <taxon>Actinomycetota</taxon>
        <taxon>Actinomycetes</taxon>
        <taxon>Mycobacteriales</taxon>
        <taxon>Mycobacteriaceae</taxon>
        <taxon>Mycobacterium</taxon>
        <taxon>Mycobacterium tuberculosis complex</taxon>
    </lineage>
</organism>
<proteinExistence type="evidence at transcript level"/>
<comment type="function">
    <text evidence="1">Part of the mycobacterial fatty acid elongation system FAS-II, which is involved in mycolic acid biosynthesis. Catalyzes the elongation of long chain acyl-ACP substrates by the addition of two carbons from malonyl-ACP to an acyl acceptor. Involved in the initial extension of the mycolate chain and forms monounsaturated fatty acids that averaged 40 carbons in length.</text>
</comment>
<comment type="catalytic activity">
    <reaction evidence="1">
        <text>an ultra-long-chain mono-unsaturated fatty acyl-[ACP] + malonyl-[ACP] + H(+) = a 3-oxo-ultra-long-chain mono-unsaturated fatty acyl-[ACP] + holo-[ACP] + CO2</text>
        <dbReference type="Rhea" id="RHEA:65312"/>
        <dbReference type="Rhea" id="RHEA-COMP:9623"/>
        <dbReference type="Rhea" id="RHEA-COMP:9685"/>
        <dbReference type="Rhea" id="RHEA-COMP:16765"/>
        <dbReference type="Rhea" id="RHEA-COMP:16775"/>
        <dbReference type="ChEBI" id="CHEBI:15378"/>
        <dbReference type="ChEBI" id="CHEBI:16526"/>
        <dbReference type="ChEBI" id="CHEBI:64479"/>
        <dbReference type="ChEBI" id="CHEBI:78449"/>
        <dbReference type="ChEBI" id="CHEBI:156399"/>
        <dbReference type="ChEBI" id="CHEBI:156400"/>
        <dbReference type="EC" id="2.3.1.293"/>
    </reaction>
    <physiologicalReaction direction="left-to-right" evidence="1">
        <dbReference type="Rhea" id="RHEA:65313"/>
    </physiologicalReaction>
</comment>
<comment type="pathway">
    <text evidence="1">Lipid metabolism; mycolic acid biosynthesis.</text>
</comment>
<comment type="subcellular location">
    <subcellularLocation>
        <location evidence="1">Cytoplasm</location>
    </subcellularLocation>
</comment>
<comment type="induction">
    <text evidence="3">Repressed by Rip1 and independently by the metal chelator phenanthroline.</text>
</comment>
<comment type="similarity">
    <text evidence="4">Belongs to the thiolase-like superfamily. Beta-ketoacyl-ACP synthases family.</text>
</comment>
<name>KASA_MYCTE</name>